<dbReference type="EMBL" id="AM181176">
    <property type="protein sequence ID" value="CAY47900.1"/>
    <property type="molecule type" value="Genomic_DNA"/>
</dbReference>
<dbReference type="RefSeq" id="WP_003218804.1">
    <property type="nucleotide sequence ID" value="NC_012660.1"/>
</dbReference>
<dbReference type="SMR" id="C3K6K2"/>
<dbReference type="STRING" id="294.SRM1_04017"/>
<dbReference type="GeneID" id="93512086"/>
<dbReference type="eggNOG" id="COG0776">
    <property type="taxonomic scope" value="Bacteria"/>
</dbReference>
<dbReference type="HOGENOM" id="CLU_105066_2_0_6"/>
<dbReference type="OrthoDB" id="9804203at2"/>
<dbReference type="GO" id="GO:0005694">
    <property type="term" value="C:chromosome"/>
    <property type="evidence" value="ECO:0007669"/>
    <property type="project" value="InterPro"/>
</dbReference>
<dbReference type="GO" id="GO:0005829">
    <property type="term" value="C:cytosol"/>
    <property type="evidence" value="ECO:0007669"/>
    <property type="project" value="TreeGrafter"/>
</dbReference>
<dbReference type="GO" id="GO:0003677">
    <property type="term" value="F:DNA binding"/>
    <property type="evidence" value="ECO:0007669"/>
    <property type="project" value="UniProtKB-UniRule"/>
</dbReference>
<dbReference type="GO" id="GO:0030527">
    <property type="term" value="F:structural constituent of chromatin"/>
    <property type="evidence" value="ECO:0007669"/>
    <property type="project" value="InterPro"/>
</dbReference>
<dbReference type="GO" id="GO:0006310">
    <property type="term" value="P:DNA recombination"/>
    <property type="evidence" value="ECO:0007669"/>
    <property type="project" value="UniProtKB-UniRule"/>
</dbReference>
<dbReference type="GO" id="GO:0006355">
    <property type="term" value="P:regulation of DNA-templated transcription"/>
    <property type="evidence" value="ECO:0007669"/>
    <property type="project" value="UniProtKB-UniRule"/>
</dbReference>
<dbReference type="GO" id="GO:0006417">
    <property type="term" value="P:regulation of translation"/>
    <property type="evidence" value="ECO:0007669"/>
    <property type="project" value="UniProtKB-UniRule"/>
</dbReference>
<dbReference type="CDD" id="cd13836">
    <property type="entry name" value="IHF_B"/>
    <property type="match status" value="1"/>
</dbReference>
<dbReference type="FunFam" id="4.10.520.10:FF:000003">
    <property type="entry name" value="Integration host factor subunit beta"/>
    <property type="match status" value="1"/>
</dbReference>
<dbReference type="Gene3D" id="4.10.520.10">
    <property type="entry name" value="IHF-like DNA-binding proteins"/>
    <property type="match status" value="1"/>
</dbReference>
<dbReference type="HAMAP" id="MF_00381">
    <property type="entry name" value="IHF_beta"/>
    <property type="match status" value="1"/>
</dbReference>
<dbReference type="InterPro" id="IPR000119">
    <property type="entry name" value="Hist_DNA-bd"/>
</dbReference>
<dbReference type="InterPro" id="IPR020816">
    <property type="entry name" value="Histone-like_DNA-bd_CS"/>
</dbReference>
<dbReference type="InterPro" id="IPR010992">
    <property type="entry name" value="IHF-like_DNA-bd_dom_sf"/>
</dbReference>
<dbReference type="InterPro" id="IPR005685">
    <property type="entry name" value="IHF_beta"/>
</dbReference>
<dbReference type="NCBIfam" id="TIGR00988">
    <property type="entry name" value="hip"/>
    <property type="match status" value="1"/>
</dbReference>
<dbReference type="NCBIfam" id="NF001222">
    <property type="entry name" value="PRK00199.1"/>
    <property type="match status" value="1"/>
</dbReference>
<dbReference type="PANTHER" id="PTHR33175">
    <property type="entry name" value="DNA-BINDING PROTEIN HU"/>
    <property type="match status" value="1"/>
</dbReference>
<dbReference type="PANTHER" id="PTHR33175:SF5">
    <property type="entry name" value="INTEGRATION HOST FACTOR SUBUNIT BETA"/>
    <property type="match status" value="1"/>
</dbReference>
<dbReference type="Pfam" id="PF00216">
    <property type="entry name" value="Bac_DNA_binding"/>
    <property type="match status" value="1"/>
</dbReference>
<dbReference type="PRINTS" id="PR01727">
    <property type="entry name" value="DNABINDINGHU"/>
</dbReference>
<dbReference type="SMART" id="SM00411">
    <property type="entry name" value="BHL"/>
    <property type="match status" value="1"/>
</dbReference>
<dbReference type="SUPFAM" id="SSF47729">
    <property type="entry name" value="IHF-like DNA-binding proteins"/>
    <property type="match status" value="1"/>
</dbReference>
<dbReference type="PROSITE" id="PS00045">
    <property type="entry name" value="HISTONE_LIKE"/>
    <property type="match status" value="1"/>
</dbReference>
<accession>C3K6K2</accession>
<protein>
    <recommendedName>
        <fullName evidence="1">Integration host factor subunit beta</fullName>
        <shortName evidence="1">IHF-beta</shortName>
    </recommendedName>
</protein>
<feature type="chain" id="PRO_1000205698" description="Integration host factor subunit beta">
    <location>
        <begin position="1"/>
        <end position="98"/>
    </location>
</feature>
<name>IHFB_PSEFS</name>
<reference key="1">
    <citation type="journal article" date="2009" name="Genome Biol.">
        <title>Genomic and genetic analyses of diversity and plant interactions of Pseudomonas fluorescens.</title>
        <authorList>
            <person name="Silby M.W."/>
            <person name="Cerdeno-Tarraga A.M."/>
            <person name="Vernikos G.S."/>
            <person name="Giddens S.R."/>
            <person name="Jackson R.W."/>
            <person name="Preston G.M."/>
            <person name="Zhang X.-X."/>
            <person name="Moon C.D."/>
            <person name="Gehrig S.M."/>
            <person name="Godfrey S.A.C."/>
            <person name="Knight C.G."/>
            <person name="Malone J.G."/>
            <person name="Robinson Z."/>
            <person name="Spiers A.J."/>
            <person name="Harris S."/>
            <person name="Challis G.L."/>
            <person name="Yaxley A.M."/>
            <person name="Harris D."/>
            <person name="Seeger K."/>
            <person name="Murphy L."/>
            <person name="Rutter S."/>
            <person name="Squares R."/>
            <person name="Quail M.A."/>
            <person name="Saunders E."/>
            <person name="Mavromatis K."/>
            <person name="Brettin T.S."/>
            <person name="Bentley S.D."/>
            <person name="Hothersall J."/>
            <person name="Stephens E."/>
            <person name="Thomas C.M."/>
            <person name="Parkhill J."/>
            <person name="Levy S.B."/>
            <person name="Rainey P.B."/>
            <person name="Thomson N.R."/>
        </authorList>
    </citation>
    <scope>NUCLEOTIDE SEQUENCE [LARGE SCALE GENOMIC DNA]</scope>
    <source>
        <strain>SBW25</strain>
    </source>
</reference>
<evidence type="ECO:0000255" key="1">
    <source>
        <dbReference type="HAMAP-Rule" id="MF_00381"/>
    </source>
</evidence>
<gene>
    <name evidence="1" type="primary">ihfB</name>
    <name evidence="1" type="synonym">himD</name>
    <name type="ordered locus">PFLU_1651</name>
</gene>
<organism>
    <name type="scientific">Pseudomonas fluorescens (strain SBW25)</name>
    <dbReference type="NCBI Taxonomy" id="216595"/>
    <lineage>
        <taxon>Bacteria</taxon>
        <taxon>Pseudomonadati</taxon>
        <taxon>Pseudomonadota</taxon>
        <taxon>Gammaproteobacteria</taxon>
        <taxon>Pseudomonadales</taxon>
        <taxon>Pseudomonadaceae</taxon>
        <taxon>Pseudomonas</taxon>
    </lineage>
</organism>
<proteinExistence type="inferred from homology"/>
<keyword id="KW-0233">DNA recombination</keyword>
<keyword id="KW-0238">DNA-binding</keyword>
<keyword id="KW-0804">Transcription</keyword>
<keyword id="KW-0805">Transcription regulation</keyword>
<keyword id="KW-0810">Translation regulation</keyword>
<comment type="function">
    <text evidence="1">This protein is one of the two subunits of integration host factor, a specific DNA-binding protein that functions in genetic recombination as well as in transcriptional and translational control.</text>
</comment>
<comment type="subunit">
    <text evidence="1">Heterodimer of an alpha and a beta chain.</text>
</comment>
<comment type="similarity">
    <text evidence="1">Belongs to the bacterial histone-like protein family.</text>
</comment>
<sequence length="98" mass="11028">MTKSELIERIVTHQGLLSSKDVELAIKTMLEQMSQCLATGDRIEIRGFGSFSLHYRAPRVGRNPKTGQSVSLDGKFVPHFKPGKELRDRVNEDEEEGV</sequence>